<organism>
    <name type="scientific">Homo sapiens</name>
    <name type="common">Human</name>
    <dbReference type="NCBI Taxonomy" id="9606"/>
    <lineage>
        <taxon>Eukaryota</taxon>
        <taxon>Metazoa</taxon>
        <taxon>Chordata</taxon>
        <taxon>Craniata</taxon>
        <taxon>Vertebrata</taxon>
        <taxon>Euteleostomi</taxon>
        <taxon>Mammalia</taxon>
        <taxon>Eutheria</taxon>
        <taxon>Euarchontoglires</taxon>
        <taxon>Primates</taxon>
        <taxon>Haplorrhini</taxon>
        <taxon>Catarrhini</taxon>
        <taxon>Hominidae</taxon>
        <taxon>Homo</taxon>
    </lineage>
</organism>
<accession>Q86V59</accession>
<accession>A8K2F3</accession>
<accession>Q5U638</accession>
<accession>Q8N3H4</accession>
<accession>Q9NVE8</accession>
<reference key="1">
    <citation type="journal article" date="2007" name="BMC Genomics">
        <title>The full-ORF clone resource of the German cDNA consortium.</title>
        <authorList>
            <person name="Bechtel S."/>
            <person name="Rosenfelder H."/>
            <person name="Duda A."/>
            <person name="Schmidt C.P."/>
            <person name="Ernst U."/>
            <person name="Wellenreuther R."/>
            <person name="Mehrle A."/>
            <person name="Schuster C."/>
            <person name="Bahr A."/>
            <person name="Bloecker H."/>
            <person name="Heubner D."/>
            <person name="Hoerlein A."/>
            <person name="Michel G."/>
            <person name="Wedler H."/>
            <person name="Koehrer K."/>
            <person name="Ottenwaelder B."/>
            <person name="Poustka A."/>
            <person name="Wiemann S."/>
            <person name="Schupp I."/>
        </authorList>
    </citation>
    <scope>NUCLEOTIDE SEQUENCE [LARGE SCALE MRNA] (ISOFORM 2)</scope>
    <source>
        <tissue>Amygdala</tissue>
    </source>
</reference>
<reference key="2">
    <citation type="submission" date="2005-07" db="EMBL/GenBank/DDBJ databases">
        <authorList>
            <person name="Mural R.J."/>
            <person name="Istrail S."/>
            <person name="Sutton G.G."/>
            <person name="Florea L."/>
            <person name="Halpern A.L."/>
            <person name="Mobarry C.M."/>
            <person name="Lippert R."/>
            <person name="Walenz B."/>
            <person name="Shatkay H."/>
            <person name="Dew I."/>
            <person name="Miller J.R."/>
            <person name="Flanigan M.J."/>
            <person name="Edwards N.J."/>
            <person name="Bolanos R."/>
            <person name="Fasulo D."/>
            <person name="Halldorsson B.V."/>
            <person name="Hannenhalli S."/>
            <person name="Turner R."/>
            <person name="Yooseph S."/>
            <person name="Lu F."/>
            <person name="Nusskern D.R."/>
            <person name="Shue B.C."/>
            <person name="Zheng X.H."/>
            <person name="Zhong F."/>
            <person name="Delcher A.L."/>
            <person name="Huson D.H."/>
            <person name="Kravitz S.A."/>
            <person name="Mouchard L."/>
            <person name="Reinert K."/>
            <person name="Remington K.A."/>
            <person name="Clark A.G."/>
            <person name="Waterman M.S."/>
            <person name="Eichler E.E."/>
            <person name="Adams M.D."/>
            <person name="Hunkapiller M.W."/>
            <person name="Myers E.W."/>
            <person name="Venter J.C."/>
        </authorList>
    </citation>
    <scope>NUCLEOTIDE SEQUENCE [LARGE SCALE GENOMIC DNA]</scope>
</reference>
<reference key="3">
    <citation type="journal article" date="2004" name="Genome Res.">
        <title>The status, quality, and expansion of the NIH full-length cDNA project: the Mammalian Gene Collection (MGC).</title>
        <authorList>
            <consortium name="The MGC Project Team"/>
        </authorList>
    </citation>
    <scope>NUCLEOTIDE SEQUENCE [LARGE SCALE MRNA] (ISOFORM 1)</scope>
    <source>
        <tissue>Fetal brain</tissue>
        <tissue>Neuroblastoma</tissue>
        <tissue>Testis</tissue>
    </source>
</reference>
<reference key="4">
    <citation type="journal article" date="2004" name="Nat. Genet.">
        <title>Complete sequencing and characterization of 21,243 full-length human cDNAs.</title>
        <authorList>
            <person name="Ota T."/>
            <person name="Suzuki Y."/>
            <person name="Nishikawa T."/>
            <person name="Otsuki T."/>
            <person name="Sugiyama T."/>
            <person name="Irie R."/>
            <person name="Wakamatsu A."/>
            <person name="Hayashi K."/>
            <person name="Sato H."/>
            <person name="Nagai K."/>
            <person name="Kimura K."/>
            <person name="Makita H."/>
            <person name="Sekine M."/>
            <person name="Obayashi M."/>
            <person name="Nishi T."/>
            <person name="Shibahara T."/>
            <person name="Tanaka T."/>
            <person name="Ishii S."/>
            <person name="Yamamoto J."/>
            <person name="Saito K."/>
            <person name="Kawai Y."/>
            <person name="Isono Y."/>
            <person name="Nakamura Y."/>
            <person name="Nagahari K."/>
            <person name="Murakami K."/>
            <person name="Yasuda T."/>
            <person name="Iwayanagi T."/>
            <person name="Wagatsuma M."/>
            <person name="Shiratori A."/>
            <person name="Sudo H."/>
            <person name="Hosoiri T."/>
            <person name="Kaku Y."/>
            <person name="Kodaira H."/>
            <person name="Kondo H."/>
            <person name="Sugawara M."/>
            <person name="Takahashi M."/>
            <person name="Kanda K."/>
            <person name="Yokoi T."/>
            <person name="Furuya T."/>
            <person name="Kikkawa E."/>
            <person name="Omura Y."/>
            <person name="Abe K."/>
            <person name="Kamihara K."/>
            <person name="Katsuta N."/>
            <person name="Sato K."/>
            <person name="Tanikawa M."/>
            <person name="Yamazaki M."/>
            <person name="Ninomiya K."/>
            <person name="Ishibashi T."/>
            <person name="Yamashita H."/>
            <person name="Murakawa K."/>
            <person name="Fujimori K."/>
            <person name="Tanai H."/>
            <person name="Kimata M."/>
            <person name="Watanabe M."/>
            <person name="Hiraoka S."/>
            <person name="Chiba Y."/>
            <person name="Ishida S."/>
            <person name="Ono Y."/>
            <person name="Takiguchi S."/>
            <person name="Watanabe S."/>
            <person name="Yosida M."/>
            <person name="Hotuta T."/>
            <person name="Kusano J."/>
            <person name="Kanehori K."/>
            <person name="Takahashi-Fujii A."/>
            <person name="Hara H."/>
            <person name="Tanase T.-O."/>
            <person name="Nomura Y."/>
            <person name="Togiya S."/>
            <person name="Komai F."/>
            <person name="Hara R."/>
            <person name="Takeuchi K."/>
            <person name="Arita M."/>
            <person name="Imose N."/>
            <person name="Musashino K."/>
            <person name="Yuuki H."/>
            <person name="Oshima A."/>
            <person name="Sasaki N."/>
            <person name="Aotsuka S."/>
            <person name="Yoshikawa Y."/>
            <person name="Matsunawa H."/>
            <person name="Ichihara T."/>
            <person name="Shiohata N."/>
            <person name="Sano S."/>
            <person name="Moriya S."/>
            <person name="Momiyama H."/>
            <person name="Satoh N."/>
            <person name="Takami S."/>
            <person name="Terashima Y."/>
            <person name="Suzuki O."/>
            <person name="Nakagawa S."/>
            <person name="Senoh A."/>
            <person name="Mizoguchi H."/>
            <person name="Goto Y."/>
            <person name="Shimizu F."/>
            <person name="Wakebe H."/>
            <person name="Hishigaki H."/>
            <person name="Watanabe T."/>
            <person name="Sugiyama A."/>
            <person name="Takemoto M."/>
            <person name="Kawakami B."/>
            <person name="Yamazaki M."/>
            <person name="Watanabe K."/>
            <person name="Kumagai A."/>
            <person name="Itakura S."/>
            <person name="Fukuzumi Y."/>
            <person name="Fujimori Y."/>
            <person name="Komiyama M."/>
            <person name="Tashiro H."/>
            <person name="Tanigami A."/>
            <person name="Fujiwara T."/>
            <person name="Ono T."/>
            <person name="Yamada K."/>
            <person name="Fujii Y."/>
            <person name="Ozaki K."/>
            <person name="Hirao M."/>
            <person name="Ohmori Y."/>
            <person name="Kawabata A."/>
            <person name="Hikiji T."/>
            <person name="Kobatake N."/>
            <person name="Inagaki H."/>
            <person name="Ikema Y."/>
            <person name="Okamoto S."/>
            <person name="Okitani R."/>
            <person name="Kawakami T."/>
            <person name="Noguchi S."/>
            <person name="Itoh T."/>
            <person name="Shigeta K."/>
            <person name="Senba T."/>
            <person name="Matsumura K."/>
            <person name="Nakajima Y."/>
            <person name="Mizuno T."/>
            <person name="Morinaga M."/>
            <person name="Sasaki M."/>
            <person name="Togashi T."/>
            <person name="Oyama M."/>
            <person name="Hata H."/>
            <person name="Watanabe M."/>
            <person name="Komatsu T."/>
            <person name="Mizushima-Sugano J."/>
            <person name="Satoh T."/>
            <person name="Shirai Y."/>
            <person name="Takahashi Y."/>
            <person name="Nakagawa K."/>
            <person name="Okumura K."/>
            <person name="Nagase T."/>
            <person name="Nomura N."/>
            <person name="Kikuchi H."/>
            <person name="Masuho Y."/>
            <person name="Yamashita R."/>
            <person name="Nakai K."/>
            <person name="Yada T."/>
            <person name="Nakamura Y."/>
            <person name="Ohara O."/>
            <person name="Isogai T."/>
            <person name="Sugano S."/>
        </authorList>
    </citation>
    <scope>NUCLEOTIDE SEQUENCE [LARGE SCALE MRNA] OF 1-173 AND 195-439 (ISOFORM 1)</scope>
    <source>
        <tissue>Thalamus</tissue>
    </source>
</reference>
<reference key="5">
    <citation type="journal article" date="2006" name="Int. J. Cancer">
        <title>Identification of novel oligodendroglioma-associated candidate tumor suppressor genes in 1p36 and 19q13 using microarray-based expression profiling.</title>
        <authorList>
            <person name="Tews B."/>
            <person name="Felsberg J."/>
            <person name="Hartmann C."/>
            <person name="Kunitz A."/>
            <person name="Hahn M."/>
            <person name="Toedt G."/>
            <person name="Neben K."/>
            <person name="Hummerich L."/>
            <person name="von Deimling A."/>
            <person name="Reifenberger G."/>
            <person name="Lichter P."/>
        </authorList>
    </citation>
    <scope>IDENTIFICATION</scope>
</reference>
<reference key="6">
    <citation type="journal article" date="2011" name="BMC Syst. Biol.">
        <title>Initial characterization of the human central proteome.</title>
        <authorList>
            <person name="Burkard T.R."/>
            <person name="Planyavsky M."/>
            <person name="Kaupe I."/>
            <person name="Breitwieser F.P."/>
            <person name="Buerckstuemmer T."/>
            <person name="Bennett K.L."/>
            <person name="Superti-Furga G."/>
            <person name="Colinge J."/>
        </authorList>
    </citation>
    <scope>IDENTIFICATION BY MASS SPECTROMETRY [LARGE SCALE ANALYSIS]</scope>
</reference>
<reference key="7">
    <citation type="journal article" date="2013" name="J. Proteome Res.">
        <title>Toward a comprehensive characterization of a human cancer cell phosphoproteome.</title>
        <authorList>
            <person name="Zhou H."/>
            <person name="Di Palma S."/>
            <person name="Preisinger C."/>
            <person name="Peng M."/>
            <person name="Polat A.N."/>
            <person name="Heck A.J."/>
            <person name="Mohammed S."/>
        </authorList>
    </citation>
    <scope>IDENTIFICATION BY MASS SPECTROMETRY [LARGE SCALE ANALYSIS]</scope>
    <source>
        <tissue>Erythroleukemia</tissue>
    </source>
</reference>
<keyword id="KW-0025">Alternative splicing</keyword>
<keyword id="KW-1267">Proteomics identification</keyword>
<keyword id="KW-1185">Reference proteome</keyword>
<gene>
    <name evidence="4" type="primary">PNMA8A</name>
    <name type="synonym">PNMAL1</name>
</gene>
<sequence>MSKTMAMNLLEDWCRGMEVDIHRSLLVTGIPEDCGQAEIEETLNGVLSPLGPYRVLNKIFVREENVKAALIEVGEGVNLSTIPREFPGRGGVWRVVCRDPTQDAEFLKNLNEFLDAEGRTWEDVVRLLQLNHPTLSQNQHQPPENWAEALGVLLGAVVQIIFCMDAEIRSREEARAQEAAEFEEMAAWALAAGRKVKKEPGLAAEVGSALKAETPNNWNATEDQHEPTKPLVRRAGAKSRSRRKKQKKNSRQEAVPWKKPKGINSNSTANLEDPEVGDAESMAISEPIKGSRKPCVNKEELALKKPMAKCAWKGPREPPQDARAEAESPGGASESDQDGGHESPPKKKAVAWVSAKNPAPMRKKKKVSLGPVSYVLVDSEDGRKKPVMPKKGPGSRREASDQKAPRGQQPAEATASTSRGPKAKPEGSPRRATNESRKV</sequence>
<proteinExistence type="evidence at protein level"/>
<comment type="alternative products">
    <event type="alternative splicing"/>
    <isoform>
        <id>Q86V59-1</id>
        <name>1</name>
        <sequence type="displayed"/>
    </isoform>
    <isoform>
        <id>Q86V59-2</id>
        <name>2</name>
        <sequence type="described" ref="VSP_032441 VSP_032442"/>
    </isoform>
</comment>
<comment type="similarity">
    <text evidence="3">Belongs to the PNMA family.</text>
</comment>
<comment type="sequence caution" evidence="3">
    <conflict type="erroneous initiation">
        <sequence resource="EMBL-CDS" id="BAA91804"/>
    </conflict>
    <text>Truncated N-terminus.</text>
</comment>
<comment type="sequence caution" evidence="3">
    <conflict type="erroneous translation">
        <sequence resource="EMBL-CDS" id="BAF82907"/>
    </conflict>
    <text>Wrong choice of CDS.</text>
</comment>
<comment type="sequence caution" evidence="3">
    <conflict type="miscellaneous discrepancy">
        <sequence resource="EMBL-CDS" id="BAF82907"/>
    </conflict>
    <text>Probable cloning artifact. Aberrant splice sites.</text>
</comment>
<comment type="sequence caution" evidence="3">
    <conflict type="erroneous initiation">
        <sequence resource="EMBL-CDS" id="EAW57420"/>
    </conflict>
    <text>Truncated N-terminus.</text>
</comment>
<protein>
    <recommendedName>
        <fullName evidence="4">Paraneoplastic antigen-like protein 8A</fullName>
    </recommendedName>
    <alternativeName>
        <fullName>PNMA-like protein 1</fullName>
    </alternativeName>
</protein>
<name>PNM8A_HUMAN</name>
<dbReference type="EMBL" id="AL834344">
    <property type="protein sequence ID" value="CAD39010.1"/>
    <property type="molecule type" value="mRNA"/>
</dbReference>
<dbReference type="EMBL" id="CH471126">
    <property type="protein sequence ID" value="EAW57420.1"/>
    <property type="status" value="ALT_INIT"/>
    <property type="molecule type" value="Genomic_DNA"/>
</dbReference>
<dbReference type="EMBL" id="CH471126">
    <property type="protein sequence ID" value="EAW57421.1"/>
    <property type="molecule type" value="Genomic_DNA"/>
</dbReference>
<dbReference type="EMBL" id="BC026026">
    <property type="protein sequence ID" value="AAH26026.2"/>
    <property type="molecule type" value="mRNA"/>
</dbReference>
<dbReference type="EMBL" id="BC032508">
    <property type="protein sequence ID" value="AAH32508.1"/>
    <property type="molecule type" value="mRNA"/>
</dbReference>
<dbReference type="EMBL" id="BC051688">
    <property type="protein sequence ID" value="AAH51688.2"/>
    <property type="molecule type" value="mRNA"/>
</dbReference>
<dbReference type="EMBL" id="AK001643">
    <property type="protein sequence ID" value="BAA91804.1"/>
    <property type="status" value="ALT_INIT"/>
    <property type="molecule type" value="mRNA"/>
</dbReference>
<dbReference type="EMBL" id="AK290218">
    <property type="protein sequence ID" value="BAF82907.1"/>
    <property type="status" value="ALT_SEQ"/>
    <property type="molecule type" value="mRNA"/>
</dbReference>
<dbReference type="CCDS" id="CCDS33059.1">
    <molecule id="Q86V59-1"/>
</dbReference>
<dbReference type="CCDS" id="CCDS46124.1">
    <molecule id="Q86V59-2"/>
</dbReference>
<dbReference type="RefSeq" id="NP_001096619.1">
    <molecule id="Q86V59-2"/>
    <property type="nucleotide sequence ID" value="NM_001103149.2"/>
</dbReference>
<dbReference type="RefSeq" id="NP_060685.2">
    <molecule id="Q86V59-1"/>
    <property type="nucleotide sequence ID" value="NM_018215.3"/>
</dbReference>
<dbReference type="BioGRID" id="120523">
    <property type="interactions" value="126"/>
</dbReference>
<dbReference type="FunCoup" id="Q86V59">
    <property type="interactions" value="21"/>
</dbReference>
<dbReference type="IntAct" id="Q86V59">
    <property type="interactions" value="108"/>
</dbReference>
<dbReference type="STRING" id="9606.ENSP00000318131"/>
<dbReference type="iPTMnet" id="Q86V59"/>
<dbReference type="PhosphoSitePlus" id="Q86V59"/>
<dbReference type="BioMuta" id="PNMA8A"/>
<dbReference type="DMDM" id="74727539"/>
<dbReference type="jPOST" id="Q86V59"/>
<dbReference type="MassIVE" id="Q86V59"/>
<dbReference type="PaxDb" id="9606-ENSP00000318131"/>
<dbReference type="PeptideAtlas" id="Q86V59"/>
<dbReference type="ProteomicsDB" id="69969">
    <molecule id="Q86V59-1"/>
</dbReference>
<dbReference type="ProteomicsDB" id="69970">
    <molecule id="Q86V59-2"/>
</dbReference>
<dbReference type="Pumba" id="Q86V59"/>
<dbReference type="Antibodypedia" id="2037">
    <property type="antibodies" value="56 antibodies from 19 providers"/>
</dbReference>
<dbReference type="DNASU" id="55228"/>
<dbReference type="Ensembl" id="ENST00000313683.15">
    <molecule id="Q86V59-1"/>
    <property type="protein sequence ID" value="ENSP00000318131.10"/>
    <property type="gene ID" value="ENSG00000182013.18"/>
</dbReference>
<dbReference type="Ensembl" id="ENST00000438932.2">
    <molecule id="Q86V59-2"/>
    <property type="protein sequence ID" value="ENSP00000410273.1"/>
    <property type="gene ID" value="ENSG00000182013.18"/>
</dbReference>
<dbReference type="GeneID" id="55228"/>
<dbReference type="KEGG" id="hsa:55228"/>
<dbReference type="MANE-Select" id="ENST00000313683.15">
    <property type="protein sequence ID" value="ENSP00000318131.10"/>
    <property type="RefSeq nucleotide sequence ID" value="NM_018215.4"/>
    <property type="RefSeq protein sequence ID" value="NP_060685.2"/>
</dbReference>
<dbReference type="UCSC" id="uc002peq.5">
    <molecule id="Q86V59-1"/>
    <property type="organism name" value="human"/>
</dbReference>
<dbReference type="AGR" id="HGNC:25578"/>
<dbReference type="CTD" id="55228"/>
<dbReference type="DisGeNET" id="55228"/>
<dbReference type="GeneCards" id="PNMA8A"/>
<dbReference type="HGNC" id="HGNC:25578">
    <property type="gene designation" value="PNMA8A"/>
</dbReference>
<dbReference type="HPA" id="ENSG00000182013">
    <property type="expression patterns" value="Tissue enhanced (brain)"/>
</dbReference>
<dbReference type="MIM" id="620933">
    <property type="type" value="gene"/>
</dbReference>
<dbReference type="neXtProt" id="NX_Q86V59"/>
<dbReference type="OpenTargets" id="ENSG00000182013"/>
<dbReference type="PharmGKB" id="PA162399835"/>
<dbReference type="VEuPathDB" id="HostDB:ENSG00000182013"/>
<dbReference type="eggNOG" id="ENOG502TEDX">
    <property type="taxonomic scope" value="Eukaryota"/>
</dbReference>
<dbReference type="GeneTree" id="ENSGT01030000234522"/>
<dbReference type="HOGENOM" id="CLU_050538_0_0_1"/>
<dbReference type="InParanoid" id="Q86V59"/>
<dbReference type="OMA" id="WEDVVHL"/>
<dbReference type="OrthoDB" id="115435at2759"/>
<dbReference type="PAN-GO" id="Q86V59">
    <property type="GO annotations" value="0 GO annotations based on evolutionary models"/>
</dbReference>
<dbReference type="PhylomeDB" id="Q86V59"/>
<dbReference type="TreeFam" id="TF335054"/>
<dbReference type="PathwayCommons" id="Q86V59"/>
<dbReference type="SignaLink" id="Q86V59"/>
<dbReference type="BioGRID-ORCS" id="55228">
    <property type="hits" value="11 hits in 1148 CRISPR screens"/>
</dbReference>
<dbReference type="ChiTaRS" id="PNMAL1">
    <property type="organism name" value="human"/>
</dbReference>
<dbReference type="GeneWiki" id="FLJ10781"/>
<dbReference type="GenomeRNAi" id="55228"/>
<dbReference type="Pharos" id="Q86V59">
    <property type="development level" value="Tdark"/>
</dbReference>
<dbReference type="PRO" id="PR:Q86V59"/>
<dbReference type="Proteomes" id="UP000005640">
    <property type="component" value="Chromosome 19"/>
</dbReference>
<dbReference type="RNAct" id="Q86V59">
    <property type="molecule type" value="protein"/>
</dbReference>
<dbReference type="Bgee" id="ENSG00000182013">
    <property type="expression patterns" value="Expressed in endothelial cell and 175 other cell types or tissues"/>
</dbReference>
<dbReference type="ExpressionAtlas" id="Q86V59">
    <property type="expression patterns" value="baseline and differential"/>
</dbReference>
<dbReference type="InterPro" id="IPR049131">
    <property type="entry name" value="PNM8A_C"/>
</dbReference>
<dbReference type="InterPro" id="IPR026523">
    <property type="entry name" value="PNMA"/>
</dbReference>
<dbReference type="InterPro" id="IPR048271">
    <property type="entry name" value="PNMA_N"/>
</dbReference>
<dbReference type="PANTHER" id="PTHR23095">
    <property type="entry name" value="PARANEOPLASTIC ANTIGEN"/>
    <property type="match status" value="1"/>
</dbReference>
<dbReference type="PANTHER" id="PTHR23095:SF21">
    <property type="entry name" value="PARANEOPLASTIC ANTIGEN-LIKE PROTEIN 8A"/>
    <property type="match status" value="1"/>
</dbReference>
<dbReference type="Pfam" id="PF20847">
    <property type="entry name" value="PNM8A"/>
    <property type="match status" value="1"/>
</dbReference>
<dbReference type="Pfam" id="PF20846">
    <property type="entry name" value="PNMA_N"/>
    <property type="match status" value="1"/>
</dbReference>
<feature type="chain" id="PRO_0000325836" description="Paraneoplastic antigen-like protein 8A">
    <location>
        <begin position="1"/>
        <end position="439"/>
    </location>
</feature>
<feature type="region of interest" description="Disordered" evidence="1">
    <location>
        <begin position="208"/>
        <end position="439"/>
    </location>
</feature>
<feature type="compositionally biased region" description="Basic residues" evidence="1">
    <location>
        <begin position="231"/>
        <end position="249"/>
    </location>
</feature>
<feature type="compositionally biased region" description="Basic and acidic residues" evidence="1">
    <location>
        <begin position="314"/>
        <end position="326"/>
    </location>
</feature>
<feature type="compositionally biased region" description="Basic and acidic residues" evidence="1">
    <location>
        <begin position="395"/>
        <end position="404"/>
    </location>
</feature>
<feature type="compositionally biased region" description="Basic and acidic residues" evidence="1">
    <location>
        <begin position="423"/>
        <end position="439"/>
    </location>
</feature>
<feature type="splice variant" id="VSP_032441" description="In isoform 2." evidence="2">
    <original>VSLGPVSYVLVD</original>
    <variation>NPERFDLGDHPY</variation>
    <location>
        <begin position="367"/>
        <end position="378"/>
    </location>
</feature>
<feature type="splice variant" id="VSP_032442" description="In isoform 2." evidence="2">
    <location>
        <begin position="379"/>
        <end position="439"/>
    </location>
</feature>
<feature type="sequence variant" id="VAR_039935" description="In dbSNP:rs12610254.">
    <original>S</original>
    <variation>T</variation>
    <location>
        <position position="80"/>
    </location>
</feature>
<feature type="sequence variant" id="VAR_039936" description="In dbSNP:rs7248888.">
    <original>C</original>
    <variation>Y</variation>
    <location>
        <position position="97"/>
    </location>
</feature>
<feature type="sequence conflict" description="In Ref. 3; AAH32508." evidence="3" ref="3">
    <original>P</original>
    <variation>S</variation>
    <location>
        <position position="319"/>
    </location>
</feature>
<evidence type="ECO:0000256" key="1">
    <source>
        <dbReference type="SAM" id="MobiDB-lite"/>
    </source>
</evidence>
<evidence type="ECO:0000303" key="2">
    <source>
    </source>
</evidence>
<evidence type="ECO:0000305" key="3"/>
<evidence type="ECO:0000312" key="4">
    <source>
        <dbReference type="HGNC" id="HGNC:25578"/>
    </source>
</evidence>